<feature type="chain" id="PRO_0000417655" description="Probable trehalose-phosphate phosphatase 3">
    <location>
        <begin position="1"/>
        <end position="366"/>
    </location>
</feature>
<keyword id="KW-0378">Hydrolase</keyword>
<keyword id="KW-1185">Reference proteome</keyword>
<keyword id="KW-0346">Stress response</keyword>
<organism>
    <name type="scientific">Oryza sativa subsp. japonica</name>
    <name type="common">Rice</name>
    <dbReference type="NCBI Taxonomy" id="39947"/>
    <lineage>
        <taxon>Eukaryota</taxon>
        <taxon>Viridiplantae</taxon>
        <taxon>Streptophyta</taxon>
        <taxon>Embryophyta</taxon>
        <taxon>Tracheophyta</taxon>
        <taxon>Spermatophyta</taxon>
        <taxon>Magnoliopsida</taxon>
        <taxon>Liliopsida</taxon>
        <taxon>Poales</taxon>
        <taxon>Poaceae</taxon>
        <taxon>BOP clade</taxon>
        <taxon>Oryzoideae</taxon>
        <taxon>Oryzeae</taxon>
        <taxon>Oryzinae</taxon>
        <taxon>Oryza</taxon>
        <taxon>Oryza sativa</taxon>
    </lineage>
</organism>
<accession>Q7XI41</accession>
<accession>A0A0P0X9B0</accession>
<reference key="1">
    <citation type="journal article" date="2005" name="Nature">
        <title>The map-based sequence of the rice genome.</title>
        <authorList>
            <consortium name="International rice genome sequencing project (IRGSP)"/>
        </authorList>
    </citation>
    <scope>NUCLEOTIDE SEQUENCE [LARGE SCALE GENOMIC DNA]</scope>
    <source>
        <strain>cv. Nipponbare</strain>
    </source>
</reference>
<reference key="2">
    <citation type="journal article" date="2008" name="Nucleic Acids Res.">
        <title>The rice annotation project database (RAP-DB): 2008 update.</title>
        <authorList>
            <consortium name="The rice annotation project (RAP)"/>
        </authorList>
    </citation>
    <scope>GENOME REANNOTATION</scope>
    <source>
        <strain>cv. Nipponbare</strain>
    </source>
</reference>
<reference key="3">
    <citation type="journal article" date="2013" name="Rice">
        <title>Improvement of the Oryza sativa Nipponbare reference genome using next generation sequence and optical map data.</title>
        <authorList>
            <person name="Kawahara Y."/>
            <person name="de la Bastide M."/>
            <person name="Hamilton J.P."/>
            <person name="Kanamori H."/>
            <person name="McCombie W.R."/>
            <person name="Ouyang S."/>
            <person name="Schwartz D.C."/>
            <person name="Tanaka T."/>
            <person name="Wu J."/>
            <person name="Zhou S."/>
            <person name="Childs K.L."/>
            <person name="Davidson R.M."/>
            <person name="Lin H."/>
            <person name="Quesada-Ocampo L."/>
            <person name="Vaillancourt B."/>
            <person name="Sakai H."/>
            <person name="Lee S.S."/>
            <person name="Kim J."/>
            <person name="Numa H."/>
            <person name="Itoh T."/>
            <person name="Buell C.R."/>
            <person name="Matsumoto T."/>
        </authorList>
    </citation>
    <scope>GENOME REANNOTATION</scope>
    <source>
        <strain>cv. Nipponbare</strain>
    </source>
</reference>
<reference key="4">
    <citation type="journal article" date="2003" name="Science">
        <title>Collection, mapping, and annotation of over 28,000 cDNA clones from japonica rice.</title>
        <authorList>
            <consortium name="The rice full-length cDNA consortium"/>
        </authorList>
    </citation>
    <scope>NUCLEOTIDE SEQUENCE [LARGE SCALE MRNA]</scope>
    <source>
        <strain>cv. Nipponbare</strain>
    </source>
</reference>
<reference key="5">
    <citation type="journal article" date="2005" name="Plant Mol. Biol.">
        <title>Functional identification of a trehalose 6-phosphate phosphatase gene that is involved in transient induction of trehalose biosynthesis during chilling stress in rice.</title>
        <authorList>
            <person name="Pramanik M.H."/>
            <person name="Imai R."/>
        </authorList>
    </citation>
    <scope>GENE FAMILY</scope>
    <scope>NOMENCLATURE</scope>
    <source>
        <strain>cv. Yukihikari</strain>
    </source>
</reference>
<evidence type="ECO:0000250" key="1"/>
<evidence type="ECO:0000305" key="2"/>
<sequence length="366" mass="39999">MTNHAGFAADDAVTAAVPVQAAQGGRHFPPFLAPSSRLTDCKKAAAHVDLAGAGGVATVPGSWPRHAKPVSGAELDDWMEKHPSALAWFESVAAAAKGKEIVVFLDYDGTLSPIVADPDRAFMSDEMREAVRGVAKHFPTAIVSGRCIDKVFDFVKLEELYYAGSHGMDIRGPTAAASEYNHNMKAKQGDAVTFQPAADFLPVIEEVYHVLKERMASIRGSLVENNKFCLSVHYRCVDEAEWGVLDGKVRAVIEGYPDLRLSKGRKVLEIRPVIDWDKGSALQFLLKSLGYEGRNNVFPIYIGDDRTDEDAFKVLRNMGQGIGILVTKVPKETAASYTLREPSEVKEFLRKLVKIKINGDKGLIGK</sequence>
<comment type="function">
    <text evidence="1">Removes the phosphate from trehalose 6-phosphate to produce free trehalose. Trehalose accumulation in plant may improve abiotic stress tolerance (By similarity).</text>
</comment>
<comment type="catalytic activity">
    <reaction>
        <text>alpha,alpha-trehalose 6-phosphate + H2O = alpha,alpha-trehalose + phosphate</text>
        <dbReference type="Rhea" id="RHEA:23420"/>
        <dbReference type="ChEBI" id="CHEBI:15377"/>
        <dbReference type="ChEBI" id="CHEBI:16551"/>
        <dbReference type="ChEBI" id="CHEBI:43474"/>
        <dbReference type="ChEBI" id="CHEBI:58429"/>
        <dbReference type="EC" id="3.1.3.12"/>
    </reaction>
</comment>
<comment type="cofactor">
    <cofactor evidence="1">
        <name>a divalent metal cation</name>
        <dbReference type="ChEBI" id="CHEBI:60240"/>
    </cofactor>
</comment>
<comment type="pathway">
    <text>Glycan biosynthesis; trehalose biosynthesis.</text>
</comment>
<comment type="similarity">
    <text evidence="2">Belongs to the trehalose phosphatase family.</text>
</comment>
<proteinExistence type="evidence at transcript level"/>
<protein>
    <recommendedName>
        <fullName>Probable trehalose-phosphate phosphatase 3</fullName>
        <shortName>OsTPP3</shortName>
        <ecNumber>3.1.3.12</ecNumber>
    </recommendedName>
    <alternativeName>
        <fullName>Trehalose 6-phosphate phosphatase</fullName>
    </alternativeName>
</protein>
<gene>
    <name type="primary">TPP3</name>
    <name type="ordered locus">Os07g0624600</name>
    <name type="ordered locus">LOC_Os07g43160</name>
    <name type="ORF">P0524E08.130</name>
</gene>
<dbReference type="EC" id="3.1.3.12"/>
<dbReference type="EMBL" id="AP004341">
    <property type="protein sequence ID" value="BAC79911.1"/>
    <property type="molecule type" value="Genomic_DNA"/>
</dbReference>
<dbReference type="EMBL" id="AP008213">
    <property type="protein sequence ID" value="BAF22240.1"/>
    <property type="molecule type" value="Genomic_DNA"/>
</dbReference>
<dbReference type="EMBL" id="AP014963">
    <property type="protein sequence ID" value="BAT02720.1"/>
    <property type="molecule type" value="Genomic_DNA"/>
</dbReference>
<dbReference type="EMBL" id="AK109902">
    <property type="protein sequence ID" value="BAG98955.1"/>
    <property type="molecule type" value="mRNA"/>
</dbReference>
<dbReference type="RefSeq" id="XP_015645668.1">
    <property type="nucleotide sequence ID" value="XM_015790182.1"/>
</dbReference>
<dbReference type="SMR" id="Q7XI41"/>
<dbReference type="FunCoup" id="Q7XI41">
    <property type="interactions" value="141"/>
</dbReference>
<dbReference type="STRING" id="39947.Q7XI41"/>
<dbReference type="PaxDb" id="39947-Q7XI41"/>
<dbReference type="EnsemblPlants" id="Os07t0624600-01">
    <property type="protein sequence ID" value="Os07t0624600-01"/>
    <property type="gene ID" value="Os07g0624600"/>
</dbReference>
<dbReference type="Gramene" id="Os07t0624600-01">
    <property type="protein sequence ID" value="Os07t0624600-01"/>
    <property type="gene ID" value="Os07g0624600"/>
</dbReference>
<dbReference type="KEGG" id="dosa:Os07g0624600"/>
<dbReference type="eggNOG" id="KOG1050">
    <property type="taxonomic scope" value="Eukaryota"/>
</dbReference>
<dbReference type="HOGENOM" id="CLU_037265_1_2_1"/>
<dbReference type="InParanoid" id="Q7XI41"/>
<dbReference type="OMA" id="SNGHATM"/>
<dbReference type="OrthoDB" id="411251at2759"/>
<dbReference type="UniPathway" id="UPA00299"/>
<dbReference type="Proteomes" id="UP000000763">
    <property type="component" value="Chromosome 7"/>
</dbReference>
<dbReference type="Proteomes" id="UP000059680">
    <property type="component" value="Chromosome 7"/>
</dbReference>
<dbReference type="GO" id="GO:0004805">
    <property type="term" value="F:trehalose-phosphatase activity"/>
    <property type="evidence" value="ECO:0000318"/>
    <property type="project" value="GO_Central"/>
</dbReference>
<dbReference type="GO" id="GO:0005992">
    <property type="term" value="P:trehalose biosynthetic process"/>
    <property type="evidence" value="ECO:0000318"/>
    <property type="project" value="GO_Central"/>
</dbReference>
<dbReference type="CDD" id="cd01627">
    <property type="entry name" value="HAD_TPP"/>
    <property type="match status" value="1"/>
</dbReference>
<dbReference type="FunFam" id="3.40.50.1000:FF:000099">
    <property type="entry name" value="Trehalose 6-phosphate phosphatase"/>
    <property type="match status" value="1"/>
</dbReference>
<dbReference type="FunFam" id="3.40.50.1000:FF:000175">
    <property type="entry name" value="Trehalose 6-phosphate phosphatase"/>
    <property type="match status" value="1"/>
</dbReference>
<dbReference type="Gene3D" id="3.40.50.1000">
    <property type="entry name" value="HAD superfamily/HAD-like"/>
    <property type="match status" value="2"/>
</dbReference>
<dbReference type="InterPro" id="IPR036412">
    <property type="entry name" value="HAD-like_sf"/>
</dbReference>
<dbReference type="InterPro" id="IPR006379">
    <property type="entry name" value="HAD-SF_hydro_IIB"/>
</dbReference>
<dbReference type="InterPro" id="IPR023214">
    <property type="entry name" value="HAD_sf"/>
</dbReference>
<dbReference type="InterPro" id="IPR044651">
    <property type="entry name" value="OTSB-like"/>
</dbReference>
<dbReference type="InterPro" id="IPR003337">
    <property type="entry name" value="Trehalose_PPase"/>
</dbReference>
<dbReference type="NCBIfam" id="TIGR01484">
    <property type="entry name" value="HAD-SF-IIB"/>
    <property type="match status" value="1"/>
</dbReference>
<dbReference type="NCBIfam" id="TIGR00685">
    <property type="entry name" value="T6PP"/>
    <property type="match status" value="1"/>
</dbReference>
<dbReference type="PANTHER" id="PTHR43768">
    <property type="entry name" value="TREHALOSE 6-PHOSPHATE PHOSPHATASE"/>
    <property type="match status" value="1"/>
</dbReference>
<dbReference type="PANTHER" id="PTHR43768:SF7">
    <property type="entry name" value="TREHALOSE-PHOSPHATE PHOSPHATASE 3-RELATED"/>
    <property type="match status" value="1"/>
</dbReference>
<dbReference type="Pfam" id="PF02358">
    <property type="entry name" value="Trehalose_PPase"/>
    <property type="match status" value="1"/>
</dbReference>
<dbReference type="SUPFAM" id="SSF56784">
    <property type="entry name" value="HAD-like"/>
    <property type="match status" value="1"/>
</dbReference>
<name>TPP3_ORYSJ</name>